<protein>
    <recommendedName>
        <fullName evidence="1">Small ribosomal subunit protein uS8</fullName>
    </recommendedName>
    <alternativeName>
        <fullName evidence="2">30S ribosomal protein S8</fullName>
    </alternativeName>
</protein>
<comment type="function">
    <text evidence="1">One of the primary rRNA binding proteins, it binds directly to 16S rRNA central domain where it helps coordinate assembly of the platform of the 30S subunit.</text>
</comment>
<comment type="subunit">
    <text evidence="1">Part of the 30S ribosomal subunit. Contacts proteins S5 and S12.</text>
</comment>
<comment type="similarity">
    <text evidence="1">Belongs to the universal ribosomal protein uS8 family.</text>
</comment>
<organism>
    <name type="scientific">Thermosipho melanesiensis (strain DSM 12029 / CIP 104789 / BI429)</name>
    <dbReference type="NCBI Taxonomy" id="391009"/>
    <lineage>
        <taxon>Bacteria</taxon>
        <taxon>Thermotogati</taxon>
        <taxon>Thermotogota</taxon>
        <taxon>Thermotogae</taxon>
        <taxon>Thermotogales</taxon>
        <taxon>Fervidobacteriaceae</taxon>
        <taxon>Thermosipho</taxon>
    </lineage>
</organism>
<proteinExistence type="inferred from homology"/>
<sequence>MWSDPIADMLTRIRNANVVFKDQVDIPASNLKKEIAEILKREGFIKDYTYIEDGKQGIIRIQMKYKGTRRNRERVIHGIVRISKPGRRIYVDKEHLPKVKNGLGIAILTTSKGVITDKQAREIGVGGEVIAYIW</sequence>
<reference key="1">
    <citation type="submission" date="2007-05" db="EMBL/GenBank/DDBJ databases">
        <title>Complete sequence of Thermosipho melanesiensis BI429.</title>
        <authorList>
            <consortium name="US DOE Joint Genome Institute"/>
            <person name="Copeland A."/>
            <person name="Lucas S."/>
            <person name="Lapidus A."/>
            <person name="Barry K."/>
            <person name="Glavina del Rio T."/>
            <person name="Dalin E."/>
            <person name="Tice H."/>
            <person name="Pitluck S."/>
            <person name="Chertkov O."/>
            <person name="Brettin T."/>
            <person name="Bruce D."/>
            <person name="Detter J.C."/>
            <person name="Han C."/>
            <person name="Schmutz J."/>
            <person name="Larimer F."/>
            <person name="Land M."/>
            <person name="Hauser L."/>
            <person name="Kyrpides N."/>
            <person name="Mikhailova N."/>
            <person name="Nelson K."/>
            <person name="Gogarten J.P."/>
            <person name="Noll K."/>
            <person name="Richardson P."/>
        </authorList>
    </citation>
    <scope>NUCLEOTIDE SEQUENCE [LARGE SCALE GENOMIC DNA]</scope>
    <source>
        <strain>DSM 12029 / CIP 104789 / BI429</strain>
    </source>
</reference>
<gene>
    <name evidence="1" type="primary">rpsH</name>
    <name type="ordered locus">Tmel_0967</name>
</gene>
<feature type="chain" id="PRO_1000051803" description="Small ribosomal subunit protein uS8">
    <location>
        <begin position="1"/>
        <end position="134"/>
    </location>
</feature>
<name>RS8_THEM4</name>
<keyword id="KW-0687">Ribonucleoprotein</keyword>
<keyword id="KW-0689">Ribosomal protein</keyword>
<keyword id="KW-0694">RNA-binding</keyword>
<keyword id="KW-0699">rRNA-binding</keyword>
<evidence type="ECO:0000255" key="1">
    <source>
        <dbReference type="HAMAP-Rule" id="MF_01302"/>
    </source>
</evidence>
<evidence type="ECO:0000305" key="2"/>
<dbReference type="EMBL" id="CP000716">
    <property type="protein sequence ID" value="ABR30828.1"/>
    <property type="molecule type" value="Genomic_DNA"/>
</dbReference>
<dbReference type="RefSeq" id="WP_012057189.1">
    <property type="nucleotide sequence ID" value="NC_009616.1"/>
</dbReference>
<dbReference type="SMR" id="A6LLM7"/>
<dbReference type="STRING" id="391009.Tmel_0967"/>
<dbReference type="KEGG" id="tme:Tmel_0967"/>
<dbReference type="eggNOG" id="COG0096">
    <property type="taxonomic scope" value="Bacteria"/>
</dbReference>
<dbReference type="HOGENOM" id="CLU_098428_0_2_0"/>
<dbReference type="OrthoDB" id="9802617at2"/>
<dbReference type="Proteomes" id="UP000001110">
    <property type="component" value="Chromosome"/>
</dbReference>
<dbReference type="GO" id="GO:1990904">
    <property type="term" value="C:ribonucleoprotein complex"/>
    <property type="evidence" value="ECO:0007669"/>
    <property type="project" value="UniProtKB-KW"/>
</dbReference>
<dbReference type="GO" id="GO:0005840">
    <property type="term" value="C:ribosome"/>
    <property type="evidence" value="ECO:0007669"/>
    <property type="project" value="UniProtKB-KW"/>
</dbReference>
<dbReference type="GO" id="GO:0019843">
    <property type="term" value="F:rRNA binding"/>
    <property type="evidence" value="ECO:0007669"/>
    <property type="project" value="UniProtKB-UniRule"/>
</dbReference>
<dbReference type="GO" id="GO:0003735">
    <property type="term" value="F:structural constituent of ribosome"/>
    <property type="evidence" value="ECO:0007669"/>
    <property type="project" value="InterPro"/>
</dbReference>
<dbReference type="GO" id="GO:0006412">
    <property type="term" value="P:translation"/>
    <property type="evidence" value="ECO:0007669"/>
    <property type="project" value="UniProtKB-UniRule"/>
</dbReference>
<dbReference type="FunFam" id="3.30.1370.30:FF:000002">
    <property type="entry name" value="30S ribosomal protein S8"/>
    <property type="match status" value="1"/>
</dbReference>
<dbReference type="FunFam" id="3.30.1490.10:FF:000001">
    <property type="entry name" value="30S ribosomal protein S8"/>
    <property type="match status" value="1"/>
</dbReference>
<dbReference type="Gene3D" id="3.30.1370.30">
    <property type="match status" value="1"/>
</dbReference>
<dbReference type="Gene3D" id="3.30.1490.10">
    <property type="match status" value="1"/>
</dbReference>
<dbReference type="HAMAP" id="MF_01302_B">
    <property type="entry name" value="Ribosomal_uS8_B"/>
    <property type="match status" value="1"/>
</dbReference>
<dbReference type="InterPro" id="IPR000630">
    <property type="entry name" value="Ribosomal_uS8"/>
</dbReference>
<dbReference type="InterPro" id="IPR047863">
    <property type="entry name" value="Ribosomal_uS8_CS"/>
</dbReference>
<dbReference type="InterPro" id="IPR035987">
    <property type="entry name" value="Ribosomal_uS8_sf"/>
</dbReference>
<dbReference type="NCBIfam" id="NF001109">
    <property type="entry name" value="PRK00136.1"/>
    <property type="match status" value="1"/>
</dbReference>
<dbReference type="PANTHER" id="PTHR11758">
    <property type="entry name" value="40S RIBOSOMAL PROTEIN S15A"/>
    <property type="match status" value="1"/>
</dbReference>
<dbReference type="Pfam" id="PF00410">
    <property type="entry name" value="Ribosomal_S8"/>
    <property type="match status" value="1"/>
</dbReference>
<dbReference type="SUPFAM" id="SSF56047">
    <property type="entry name" value="Ribosomal protein S8"/>
    <property type="match status" value="1"/>
</dbReference>
<dbReference type="PROSITE" id="PS00053">
    <property type="entry name" value="RIBOSOMAL_S8"/>
    <property type="match status" value="1"/>
</dbReference>
<accession>A6LLM7</accession>